<organism>
    <name type="scientific">Homo sapiens</name>
    <name type="common">Human</name>
    <dbReference type="NCBI Taxonomy" id="9606"/>
    <lineage>
        <taxon>Eukaryota</taxon>
        <taxon>Metazoa</taxon>
        <taxon>Chordata</taxon>
        <taxon>Craniata</taxon>
        <taxon>Vertebrata</taxon>
        <taxon>Euteleostomi</taxon>
        <taxon>Mammalia</taxon>
        <taxon>Eutheria</taxon>
        <taxon>Euarchontoglires</taxon>
        <taxon>Primates</taxon>
        <taxon>Haplorrhini</taxon>
        <taxon>Catarrhini</taxon>
        <taxon>Hominidae</taxon>
        <taxon>Homo</taxon>
    </lineage>
</organism>
<keyword id="KW-0002">3D-structure</keyword>
<keyword id="KW-0007">Acetylation</keyword>
<keyword id="KW-0025">Alternative splicing</keyword>
<keyword id="KW-0067">ATP-binding</keyword>
<keyword id="KW-0131">Cell cycle</keyword>
<keyword id="KW-0132">Cell division</keyword>
<keyword id="KW-0175">Coiled coil</keyword>
<keyword id="KW-0963">Cytoplasm</keyword>
<keyword id="KW-0206">Cytoskeleton</keyword>
<keyword id="KW-0217">Developmental protein</keyword>
<keyword id="KW-0221">Differentiation</keyword>
<keyword id="KW-0225">Disease variant</keyword>
<keyword id="KW-0451">Lissencephaly</keyword>
<keyword id="KW-0493">Microtubule</keyword>
<keyword id="KW-0498">Mitosis</keyword>
<keyword id="KW-0505">Motor protein</keyword>
<keyword id="KW-0524">Neurogenesis</keyword>
<keyword id="KW-0547">Nucleotide-binding</keyword>
<keyword id="KW-0597">Phosphoprotein</keyword>
<keyword id="KW-1267">Proteomics identification</keyword>
<keyword id="KW-1185">Reference proteome</keyword>
<gene>
    <name type="primary">KIF2A</name>
    <name type="synonym">KIF2</name>
    <name type="synonym">KNS2</name>
</gene>
<protein>
    <recommendedName>
        <fullName>Kinesin-like protein KIF2A</fullName>
    </recommendedName>
    <alternativeName>
        <fullName>Kinesin-2</fullName>
        <shortName>hK2</shortName>
    </alternativeName>
</protein>
<accession>O00139</accession>
<accession>A5YM42</accession>
<accession>A5YM54</accession>
<accession>B4DY54</accession>
<accession>D3DW97</accession>
<accession>E9PB70</accession>
<accession>Q7Z5I3</accession>
<accession>Q8N5Q7</accession>
<sequence length="706" mass="79955">MATANFGKIQIGIYVEIKRSDGRIHQAMVTSLNEDNESVTVEWIENGDTKGKEIDLESIFSLNPDLVPDEEIEPSPETPPPPASSAKVNKIVKNRRTVASIKNDPPSRDNRVVGSARARPSQFPEQSSSAQQNGSVSDISPVQAAKKEFGPPSRRKSNCVKEVEKLQEKREKRRLQQQELREKRAQDVDATNPNYEIMCMIRDFRGSLDYRPLTTADPIDEHRICVCVRKRPLNKKETQMKDLDVITIPSKDVVMVHEPKQKVDLTRYLENQTFRFDYAFDDSAPNEMVYRFTARPLVETIFERGMATCFAYGQTGSGKTHTMGGDFSGKNQDCSKGIYALAARDVFLMLKKPNYKKLELQVYATFFEIYSGKVFDLLNRKTKLRVLEDGKQQVQVVGLQEREVKCVEDVLKLIDIGNSCRTSGQTSANAHSSRSHAVFQIILRRKGKLHGKFSLIDLAGNERGADTSSADRQTRLEGAEINKSLLALKECIRALGRNKPHTPFRASKLTQVLRDSFIGENSRTCMIATISPGMASCENTLNTLRYANRVKELTVDPTAAGDVRPIMHHPPNQIDDLETQWGVGSSPQRDDLKLLCEQNEEEVSPQLFTFHEAVSQMVEMEEQVVEDHRAVFQESIRWLEDEKALLEMTEEVDYDVDSYATQLEAILEQKIDILTELRDKVKSFRAALQEEEQASKQINPKRPRAL</sequence>
<dbReference type="EMBL" id="Y08319">
    <property type="protein sequence ID" value="CAA69621.1"/>
    <property type="molecule type" value="mRNA"/>
</dbReference>
<dbReference type="EMBL" id="AK302270">
    <property type="protein sequence ID" value="BAG63616.1"/>
    <property type="molecule type" value="mRNA"/>
</dbReference>
<dbReference type="EMBL" id="EF560716">
    <property type="protein sequence ID" value="ABQ59026.1"/>
    <property type="molecule type" value="mRNA"/>
</dbReference>
<dbReference type="EMBL" id="EF560728">
    <property type="protein sequence ID" value="ABQ59038.1"/>
    <property type="molecule type" value="mRNA"/>
</dbReference>
<dbReference type="EMBL" id="AC016637">
    <property type="status" value="NOT_ANNOTATED_CDS"/>
    <property type="molecule type" value="Genomic_DNA"/>
</dbReference>
<dbReference type="EMBL" id="AC034242">
    <property type="status" value="NOT_ANNOTATED_CDS"/>
    <property type="molecule type" value="Genomic_DNA"/>
</dbReference>
<dbReference type="EMBL" id="AC114982">
    <property type="status" value="NOT_ANNOTATED_CDS"/>
    <property type="molecule type" value="Genomic_DNA"/>
</dbReference>
<dbReference type="EMBL" id="CH471137">
    <property type="protein sequence ID" value="EAW51388.1"/>
    <property type="molecule type" value="Genomic_DNA"/>
</dbReference>
<dbReference type="EMBL" id="CH471137">
    <property type="protein sequence ID" value="EAW51390.1"/>
    <property type="molecule type" value="Genomic_DNA"/>
</dbReference>
<dbReference type="EMBL" id="BC031828">
    <property type="protein sequence ID" value="AAH31828.1"/>
    <property type="molecule type" value="mRNA"/>
</dbReference>
<dbReference type="EMBL" id="AY317140">
    <property type="protein sequence ID" value="AAP84320.1"/>
    <property type="status" value="ALT_INIT"/>
    <property type="molecule type" value="mRNA"/>
</dbReference>
<dbReference type="CCDS" id="CCDS3980.2">
    <molecule id="O00139-3"/>
</dbReference>
<dbReference type="CCDS" id="CCDS47216.1">
    <molecule id="O00139-4"/>
</dbReference>
<dbReference type="CCDS" id="CCDS58949.2">
    <molecule id="O00139-1"/>
</dbReference>
<dbReference type="RefSeq" id="NP_001091981.1">
    <molecule id="O00139-4"/>
    <property type="nucleotide sequence ID" value="NM_001098511.3"/>
</dbReference>
<dbReference type="RefSeq" id="NP_001230881.2">
    <molecule id="O00139-1"/>
    <property type="nucleotide sequence ID" value="NM_001243952.2"/>
</dbReference>
<dbReference type="RefSeq" id="NP_004511.2">
    <molecule id="O00139-3"/>
    <property type="nucleotide sequence ID" value="NM_004520.5"/>
</dbReference>
<dbReference type="PDB" id="2GRY">
    <property type="method" value="X-ray"/>
    <property type="resolution" value="2.35 A"/>
    <property type="chains" value="A=153-553"/>
</dbReference>
<dbReference type="PDB" id="6BBN">
    <property type="method" value="X-ray"/>
    <property type="resolution" value="3.51 A"/>
    <property type="chains" value="E=153-553"/>
</dbReference>
<dbReference type="PDBsum" id="2GRY"/>
<dbReference type="PDBsum" id="6BBN"/>
<dbReference type="SASBDB" id="O00139"/>
<dbReference type="SMR" id="O00139"/>
<dbReference type="BioGRID" id="109997">
    <property type="interactions" value="270"/>
</dbReference>
<dbReference type="CORUM" id="O00139"/>
<dbReference type="DIP" id="DIP-56112N"/>
<dbReference type="FunCoup" id="O00139">
    <property type="interactions" value="2913"/>
</dbReference>
<dbReference type="IntAct" id="O00139">
    <property type="interactions" value="112"/>
</dbReference>
<dbReference type="MINT" id="O00139"/>
<dbReference type="STRING" id="9606.ENSP00000385000"/>
<dbReference type="GlyGen" id="O00139">
    <property type="glycosylation" value="2 sites, 1 O-linked glycan (1 site)"/>
</dbReference>
<dbReference type="iPTMnet" id="O00139"/>
<dbReference type="PhosphoSitePlus" id="O00139"/>
<dbReference type="SwissPalm" id="O00139"/>
<dbReference type="BioMuta" id="KIF2A"/>
<dbReference type="jPOST" id="O00139"/>
<dbReference type="MassIVE" id="O00139"/>
<dbReference type="PaxDb" id="9606-ENSP00000385000"/>
<dbReference type="PeptideAtlas" id="O00139"/>
<dbReference type="ProteomicsDB" id="19159"/>
<dbReference type="ProteomicsDB" id="47722">
    <molecule id="O00139-3"/>
</dbReference>
<dbReference type="ProteomicsDB" id="47723">
    <molecule id="O00139-1"/>
</dbReference>
<dbReference type="ProteomicsDB" id="47724">
    <molecule id="O00139-2"/>
</dbReference>
<dbReference type="ProteomicsDB" id="47725">
    <molecule id="O00139-4"/>
</dbReference>
<dbReference type="Pumba" id="O00139"/>
<dbReference type="Antibodypedia" id="1353">
    <property type="antibodies" value="215 antibodies from 30 providers"/>
</dbReference>
<dbReference type="DNASU" id="3796"/>
<dbReference type="Ensembl" id="ENST00000381103.7">
    <molecule id="O00139-1"/>
    <property type="protein sequence ID" value="ENSP00000370493.3"/>
    <property type="gene ID" value="ENSG00000068796.19"/>
</dbReference>
<dbReference type="Ensembl" id="ENST00000401507.7">
    <molecule id="O00139-3"/>
    <property type="protein sequence ID" value="ENSP00000385622.3"/>
    <property type="gene ID" value="ENSG00000068796.19"/>
</dbReference>
<dbReference type="Ensembl" id="ENST00000407818.8">
    <molecule id="O00139-4"/>
    <property type="protein sequence ID" value="ENSP00000385000.3"/>
    <property type="gene ID" value="ENSG00000068796.19"/>
</dbReference>
<dbReference type="Ensembl" id="ENST00000506857.5">
    <molecule id="O00139-2"/>
    <property type="protein sequence ID" value="ENSP00000423772.1"/>
    <property type="gene ID" value="ENSG00000068796.19"/>
</dbReference>
<dbReference type="Ensembl" id="ENST00000676413.1">
    <molecule id="O00139-1"/>
    <property type="protein sequence ID" value="ENSP00000502125.1"/>
    <property type="gene ID" value="ENSG00000068796.19"/>
</dbReference>
<dbReference type="GeneID" id="3796"/>
<dbReference type="KEGG" id="hsa:3796"/>
<dbReference type="MANE-Select" id="ENST00000407818.8">
    <molecule id="O00139-4"/>
    <property type="protein sequence ID" value="ENSP00000385000.3"/>
    <property type="RefSeq nucleotide sequence ID" value="NM_001098511.3"/>
    <property type="RefSeq protein sequence ID" value="NP_001091981.1"/>
</dbReference>
<dbReference type="UCSC" id="uc003jsx.5">
    <molecule id="O00139-3"/>
    <property type="organism name" value="human"/>
</dbReference>
<dbReference type="AGR" id="HGNC:6318"/>
<dbReference type="CTD" id="3796"/>
<dbReference type="DisGeNET" id="3796"/>
<dbReference type="GeneCards" id="KIF2A"/>
<dbReference type="HGNC" id="HGNC:6318">
    <property type="gene designation" value="KIF2A"/>
</dbReference>
<dbReference type="HPA" id="ENSG00000068796">
    <property type="expression patterns" value="Low tissue specificity"/>
</dbReference>
<dbReference type="MalaCards" id="KIF2A"/>
<dbReference type="MIM" id="602591">
    <property type="type" value="gene"/>
</dbReference>
<dbReference type="MIM" id="615411">
    <property type="type" value="phenotype"/>
</dbReference>
<dbReference type="neXtProt" id="NX_O00139"/>
<dbReference type="OpenTargets" id="ENSG00000068796"/>
<dbReference type="PharmGKB" id="PA162393356"/>
<dbReference type="VEuPathDB" id="HostDB:ENSG00000068796"/>
<dbReference type="eggNOG" id="KOG0246">
    <property type="taxonomic scope" value="Eukaryota"/>
</dbReference>
<dbReference type="GeneTree" id="ENSGT00940000155570"/>
<dbReference type="HOGENOM" id="CLU_001485_19_1_1"/>
<dbReference type="InParanoid" id="O00139"/>
<dbReference type="OMA" id="NWDTARM"/>
<dbReference type="OrthoDB" id="3176171at2759"/>
<dbReference type="PAN-GO" id="O00139">
    <property type="GO annotations" value="7 GO annotations based on evolutionary models"/>
</dbReference>
<dbReference type="PhylomeDB" id="O00139"/>
<dbReference type="TreeFam" id="TF105222"/>
<dbReference type="PathwayCommons" id="O00139"/>
<dbReference type="Reactome" id="R-HSA-141444">
    <property type="pathway name" value="Amplification of signal from unattached kinetochores via a MAD2 inhibitory signal"/>
</dbReference>
<dbReference type="Reactome" id="R-HSA-2132295">
    <property type="pathway name" value="MHC class II antigen presentation"/>
</dbReference>
<dbReference type="Reactome" id="R-HSA-2467813">
    <property type="pathway name" value="Separation of Sister Chromatids"/>
</dbReference>
<dbReference type="Reactome" id="R-HSA-2500257">
    <property type="pathway name" value="Resolution of Sister Chromatid Cohesion"/>
</dbReference>
<dbReference type="Reactome" id="R-HSA-5663220">
    <property type="pathway name" value="RHO GTPases Activate Formins"/>
</dbReference>
<dbReference type="Reactome" id="R-HSA-6811434">
    <property type="pathway name" value="COPI-dependent Golgi-to-ER retrograde traffic"/>
</dbReference>
<dbReference type="Reactome" id="R-HSA-68877">
    <property type="pathway name" value="Mitotic Prometaphase"/>
</dbReference>
<dbReference type="Reactome" id="R-HSA-9648025">
    <property type="pathway name" value="EML4 and NUDC in mitotic spindle formation"/>
</dbReference>
<dbReference type="Reactome" id="R-HSA-983189">
    <property type="pathway name" value="Kinesins"/>
</dbReference>
<dbReference type="SignaLink" id="O00139"/>
<dbReference type="SIGNOR" id="O00139"/>
<dbReference type="BioGRID-ORCS" id="3796">
    <property type="hits" value="61 hits in 1163 CRISPR screens"/>
</dbReference>
<dbReference type="CD-CODE" id="8C2F96ED">
    <property type="entry name" value="Centrosome"/>
</dbReference>
<dbReference type="CD-CODE" id="FB4E32DD">
    <property type="entry name" value="Presynaptic clusters and postsynaptic densities"/>
</dbReference>
<dbReference type="ChiTaRS" id="KIF2A">
    <property type="organism name" value="human"/>
</dbReference>
<dbReference type="EvolutionaryTrace" id="O00139"/>
<dbReference type="GeneWiki" id="KIF2A"/>
<dbReference type="GenomeRNAi" id="3796"/>
<dbReference type="Pharos" id="O00139">
    <property type="development level" value="Tbio"/>
</dbReference>
<dbReference type="PRO" id="PR:O00139"/>
<dbReference type="Proteomes" id="UP000005640">
    <property type="component" value="Chromosome 5"/>
</dbReference>
<dbReference type="RNAct" id="O00139">
    <property type="molecule type" value="protein"/>
</dbReference>
<dbReference type="Bgee" id="ENSG00000068796">
    <property type="expression patterns" value="Expressed in cortical plate and 198 other cell types or tissues"/>
</dbReference>
<dbReference type="ExpressionAtlas" id="O00139">
    <property type="expression patterns" value="baseline and differential"/>
</dbReference>
<dbReference type="GO" id="GO:0120103">
    <property type="term" value="C:centriolar subdistal appendage"/>
    <property type="evidence" value="ECO:0000314"/>
    <property type="project" value="GO_Central"/>
</dbReference>
<dbReference type="GO" id="GO:0005814">
    <property type="term" value="C:centriole"/>
    <property type="evidence" value="ECO:0000314"/>
    <property type="project" value="GO_Central"/>
</dbReference>
<dbReference type="GO" id="GO:0005813">
    <property type="term" value="C:centrosome"/>
    <property type="evidence" value="ECO:0000314"/>
    <property type="project" value="HPA"/>
</dbReference>
<dbReference type="GO" id="GO:0036064">
    <property type="term" value="C:ciliary basal body"/>
    <property type="evidence" value="ECO:0000314"/>
    <property type="project" value="HPA"/>
</dbReference>
<dbReference type="GO" id="GO:0005737">
    <property type="term" value="C:cytoplasm"/>
    <property type="evidence" value="ECO:0000314"/>
    <property type="project" value="ARUK-UCL"/>
</dbReference>
<dbReference type="GO" id="GO:0005829">
    <property type="term" value="C:cytosol"/>
    <property type="evidence" value="ECO:0000314"/>
    <property type="project" value="HPA"/>
</dbReference>
<dbReference type="GO" id="GO:0005871">
    <property type="term" value="C:kinesin complex"/>
    <property type="evidence" value="ECO:0000318"/>
    <property type="project" value="GO_Central"/>
</dbReference>
<dbReference type="GO" id="GO:0016020">
    <property type="term" value="C:membrane"/>
    <property type="evidence" value="ECO:0007005"/>
    <property type="project" value="UniProtKB"/>
</dbReference>
<dbReference type="GO" id="GO:0005874">
    <property type="term" value="C:microtubule"/>
    <property type="evidence" value="ECO:0007669"/>
    <property type="project" value="UniProtKB-KW"/>
</dbReference>
<dbReference type="GO" id="GO:0072686">
    <property type="term" value="C:mitotic spindle"/>
    <property type="evidence" value="ECO:0000314"/>
    <property type="project" value="HPA"/>
</dbReference>
<dbReference type="GO" id="GO:0016604">
    <property type="term" value="C:nuclear body"/>
    <property type="evidence" value="ECO:0000314"/>
    <property type="project" value="HPA"/>
</dbReference>
<dbReference type="GO" id="GO:0005730">
    <property type="term" value="C:nucleolus"/>
    <property type="evidence" value="ECO:0000314"/>
    <property type="project" value="HPA"/>
</dbReference>
<dbReference type="GO" id="GO:0005654">
    <property type="term" value="C:nucleoplasm"/>
    <property type="evidence" value="ECO:0000314"/>
    <property type="project" value="HPA"/>
</dbReference>
<dbReference type="GO" id="GO:0005819">
    <property type="term" value="C:spindle"/>
    <property type="evidence" value="ECO:0000318"/>
    <property type="project" value="GO_Central"/>
</dbReference>
<dbReference type="GO" id="GO:0000922">
    <property type="term" value="C:spindle pole"/>
    <property type="evidence" value="ECO:0007669"/>
    <property type="project" value="UniProtKB-SubCell"/>
</dbReference>
<dbReference type="GO" id="GO:0005524">
    <property type="term" value="F:ATP binding"/>
    <property type="evidence" value="ECO:0007669"/>
    <property type="project" value="UniProtKB-KW"/>
</dbReference>
<dbReference type="GO" id="GO:0016887">
    <property type="term" value="F:ATP hydrolysis activity"/>
    <property type="evidence" value="ECO:0000318"/>
    <property type="project" value="GO_Central"/>
</dbReference>
<dbReference type="GO" id="GO:0003774">
    <property type="term" value="F:cytoskeletal motor activity"/>
    <property type="evidence" value="ECO:0000304"/>
    <property type="project" value="ProtInc"/>
</dbReference>
<dbReference type="GO" id="GO:0008017">
    <property type="term" value="F:microtubule binding"/>
    <property type="evidence" value="ECO:0000314"/>
    <property type="project" value="ARUK-UCL"/>
</dbReference>
<dbReference type="GO" id="GO:0003777">
    <property type="term" value="F:microtubule motor activity"/>
    <property type="evidence" value="ECO:0000318"/>
    <property type="project" value="GO_Central"/>
</dbReference>
<dbReference type="GO" id="GO:0030154">
    <property type="term" value="P:cell differentiation"/>
    <property type="evidence" value="ECO:0007669"/>
    <property type="project" value="UniProtKB-KW"/>
</dbReference>
<dbReference type="GO" id="GO:0051301">
    <property type="term" value="P:cell division"/>
    <property type="evidence" value="ECO:0007669"/>
    <property type="project" value="UniProtKB-KW"/>
</dbReference>
<dbReference type="GO" id="GO:0000226">
    <property type="term" value="P:microtubule cytoskeleton organization"/>
    <property type="evidence" value="ECO:0000316"/>
    <property type="project" value="ARUK-UCL"/>
</dbReference>
<dbReference type="GO" id="GO:0007019">
    <property type="term" value="P:microtubule depolymerization"/>
    <property type="evidence" value="ECO:0000304"/>
    <property type="project" value="ARUK-UCL"/>
</dbReference>
<dbReference type="GO" id="GO:0007018">
    <property type="term" value="P:microtubule-based movement"/>
    <property type="evidence" value="ECO:0000318"/>
    <property type="project" value="GO_Central"/>
</dbReference>
<dbReference type="GO" id="GO:0090307">
    <property type="term" value="P:mitotic spindle assembly"/>
    <property type="evidence" value="ECO:0000315"/>
    <property type="project" value="UniProtKB"/>
</dbReference>
<dbReference type="GO" id="GO:0007052">
    <property type="term" value="P:mitotic spindle organization"/>
    <property type="evidence" value="ECO:0000314"/>
    <property type="project" value="UniProtKB"/>
</dbReference>
<dbReference type="GO" id="GO:0007399">
    <property type="term" value="P:nervous system development"/>
    <property type="evidence" value="ECO:0007669"/>
    <property type="project" value="UniProtKB-KW"/>
</dbReference>
<dbReference type="GO" id="GO:0030334">
    <property type="term" value="P:regulation of cell migration"/>
    <property type="evidence" value="ECO:0000316"/>
    <property type="project" value="ARUK-UCL"/>
</dbReference>
<dbReference type="CDD" id="cd01367">
    <property type="entry name" value="KISc_KIF2_like"/>
    <property type="match status" value="1"/>
</dbReference>
<dbReference type="FunFam" id="3.40.850.10:FF:000006">
    <property type="entry name" value="Kinesin-like protein"/>
    <property type="match status" value="1"/>
</dbReference>
<dbReference type="Gene3D" id="3.40.850.10">
    <property type="entry name" value="Kinesin motor domain"/>
    <property type="match status" value="1"/>
</dbReference>
<dbReference type="InterPro" id="IPR054473">
    <property type="entry name" value="KIF2A-like_N"/>
</dbReference>
<dbReference type="InterPro" id="IPR027640">
    <property type="entry name" value="Kinesin-like_fam"/>
</dbReference>
<dbReference type="InterPro" id="IPR019821">
    <property type="entry name" value="Kinesin_motor_CS"/>
</dbReference>
<dbReference type="InterPro" id="IPR001752">
    <property type="entry name" value="Kinesin_motor_dom"/>
</dbReference>
<dbReference type="InterPro" id="IPR036961">
    <property type="entry name" value="Kinesin_motor_dom_sf"/>
</dbReference>
<dbReference type="InterPro" id="IPR027417">
    <property type="entry name" value="P-loop_NTPase"/>
</dbReference>
<dbReference type="PANTHER" id="PTHR47971:SF24">
    <property type="entry name" value="KINESIN-LIKE PROTEIN"/>
    <property type="match status" value="1"/>
</dbReference>
<dbReference type="PANTHER" id="PTHR47971">
    <property type="entry name" value="KINESIN-RELATED PROTEIN 6"/>
    <property type="match status" value="1"/>
</dbReference>
<dbReference type="Pfam" id="PF22923">
    <property type="entry name" value="KIF2A-like_1st"/>
    <property type="match status" value="1"/>
</dbReference>
<dbReference type="Pfam" id="PF00225">
    <property type="entry name" value="Kinesin"/>
    <property type="match status" value="1"/>
</dbReference>
<dbReference type="PRINTS" id="PR00380">
    <property type="entry name" value="KINESINHEAVY"/>
</dbReference>
<dbReference type="SMART" id="SM00129">
    <property type="entry name" value="KISc"/>
    <property type="match status" value="1"/>
</dbReference>
<dbReference type="SUPFAM" id="SSF52540">
    <property type="entry name" value="P-loop containing nucleoside triphosphate hydrolases"/>
    <property type="match status" value="1"/>
</dbReference>
<dbReference type="PROSITE" id="PS00411">
    <property type="entry name" value="KINESIN_MOTOR_1"/>
    <property type="match status" value="1"/>
</dbReference>
<dbReference type="PROSITE" id="PS50067">
    <property type="entry name" value="KINESIN_MOTOR_2"/>
    <property type="match status" value="1"/>
</dbReference>
<name>KIF2A_HUMAN</name>
<comment type="function">
    <text evidence="6 7 8 11">Plus end-directed microtubule-dependent motor required for normal brain development. May regulate microtubule dynamics during axonal growth. Required for normal progression through mitosis. Required for normal congress of chromosomes at the metaphase plate. Required for normal spindle dynamics during mitosis. Promotes spindle turnover. Implicated in formation of bipolar mitotic spindles. Has microtubule depolymerization activity.</text>
</comment>
<comment type="subunit">
    <text evidence="8 9 11">Interacts with AURKA and PLK1 (PubMed:19351716). Interacts with PSRC1 (PubMed:18411309). Interacts with MCRS1; the interaction enhances recruitment of KIF2A to the minus ends of spindle microtubules which promotes chromosome alignment (PubMed:30785839).</text>
</comment>
<comment type="interaction">
    <interactant intactId="EBI-2692369">
        <id>O00139</id>
    </interactant>
    <interactant intactId="EBI-1104799">
        <id>Q5SW79</id>
        <label>CEP170</label>
    </interactant>
    <organismsDiffer>false</organismsDiffer>
    <experiments>4</experiments>
</comment>
<comment type="interaction">
    <interactant intactId="EBI-2692369">
        <id>O00139</id>
    </interactant>
    <interactant intactId="EBI-751248">
        <id>Q8NE31</id>
        <label>FAM13C</label>
    </interactant>
    <organismsDiffer>false</organismsDiffer>
    <experiments>4</experiments>
</comment>
<comment type="interaction">
    <interactant intactId="EBI-2692369">
        <id>O00139</id>
    </interactant>
    <interactant intactId="EBI-3940258">
        <id>Q659C4</id>
        <label>LARP1B</label>
    </interactant>
    <organismsDiffer>false</organismsDiffer>
    <experiments>3</experiments>
</comment>
<comment type="interaction">
    <interactant intactId="EBI-2692369">
        <id>O00139</id>
    </interactant>
    <interactant intactId="EBI-2513715">
        <id>Q96EL3</id>
        <label>MRPL53</label>
    </interactant>
    <organismsDiffer>false</organismsDiffer>
    <experiments>3</experiments>
</comment>
<comment type="interaction">
    <interactant intactId="EBI-12197879">
        <id>O00139-1</id>
    </interactant>
    <interactant intactId="EBI-11959475">
        <id>P25791-3</id>
        <label>LMO2</label>
    </interactant>
    <organismsDiffer>false</organismsDiffer>
    <experiments>3</experiments>
</comment>
<comment type="interaction">
    <interactant intactId="EBI-12197879">
        <id>O00139-1</id>
    </interactant>
    <interactant intactId="EBI-11742507">
        <id>Q8TAP4-4</id>
        <label>LMO3</label>
    </interactant>
    <organismsDiffer>false</organismsDiffer>
    <experiments>3</experiments>
</comment>
<comment type="interaction">
    <interactant intactId="EBI-12197879">
        <id>O00139-1</id>
    </interactant>
    <interactant intactId="EBI-2513715">
        <id>Q96EL3</id>
        <label>MRPL53</label>
    </interactant>
    <organismsDiffer>false</organismsDiffer>
    <experiments>3</experiments>
</comment>
<comment type="interaction">
    <interactant intactId="EBI-12197879">
        <id>O00139-1</id>
    </interactant>
    <interactant intactId="EBI-5235340">
        <id>Q7Z699</id>
        <label>SPRED1</label>
    </interactant>
    <organismsDiffer>false</organismsDiffer>
    <experiments>3</experiments>
</comment>
<comment type="subcellular location">
    <subcellularLocation>
        <location evidence="1">Cytoplasm</location>
    </subcellularLocation>
    <subcellularLocation>
        <location>Cytoplasm</location>
        <location>Cytoskeleton</location>
        <location>Microtubule organizing center</location>
        <location>Centrosome</location>
    </subcellularLocation>
    <subcellularLocation>
        <location evidence="11">Cytoplasm</location>
        <location evidence="11">Cytoskeleton</location>
        <location evidence="11">Spindle pole</location>
    </subcellularLocation>
    <subcellularLocation>
        <location>Cytoplasm</location>
        <location>Cytoskeleton</location>
        <location>Spindle</location>
    </subcellularLocation>
    <text>Localized to the spindle microtubules and spindle poles from prophase to metaphase. Efficient targeting to spindle microtubules and spindle poles requires the kinase activity of PLK1. Recruited to mitotic spindles by interaction with PSRC1.</text>
</comment>
<comment type="alternative products">
    <event type="alternative splicing"/>
    <isoform>
        <id>O00139-3</id>
        <name>3</name>
        <sequence type="displayed"/>
    </isoform>
    <isoform>
        <id>O00139-1</id>
        <name>1</name>
        <name>HK2</name>
        <sequence type="described" ref="VSP_028374"/>
    </isoform>
    <isoform>
        <id>O00139-2</id>
        <name>2</name>
        <name>HK2s</name>
        <sequence type="described" ref="VSP_028374 VSP_028375"/>
    </isoform>
    <isoform>
        <id>O00139-4</id>
        <name>4</name>
        <sequence type="described" ref="VSP_028376"/>
    </isoform>
    <isoform>
        <id>O00139-5</id>
        <name>5</name>
        <sequence type="described" ref="VSP_047373"/>
    </isoform>
</comment>
<comment type="disease" evidence="10">
    <disease id="DI-03884">
        <name>Cortical dysplasia, complex, with other brain malformations 3</name>
        <acronym>CDCBM3</acronym>
        <description>A disorder of aberrant neuronal migration and disturbed axonal guidance. Clinical features include early-onset epilepsy, and various malformations of cortical development such as agyria, posterior or frontal pachygyria, subcortical band heterotopia, and thin corpus callosum.</description>
        <dbReference type="MIM" id="615411"/>
    </disease>
    <text>The disease is caused by variants affecting the gene represented in this entry.</text>
</comment>
<comment type="miscellaneous">
    <text>HeLa cells lacking KIF2A show asymmetric or monopolar mitotic spindles. Osteosarcoma cells (U2OS) lacking KIF2A or KIF2B show disorganised or monopolar mitotic spindles.</text>
</comment>
<comment type="similarity">
    <text evidence="4">Belongs to the TRAFAC class myosin-kinesin ATPase superfamily. Kinesin family. MCAK/KIF2 subfamily.</text>
</comment>
<comment type="sequence caution" evidence="16">
    <conflict type="erroneous initiation">
        <sequence resource="EMBL-CDS" id="AAP84320"/>
    </conflict>
    <text>Truncated N-terminus.</text>
</comment>
<feature type="chain" id="PRO_0000125414" description="Kinesin-like protein KIF2A">
    <location>
        <begin position="1"/>
        <end position="706"/>
    </location>
</feature>
<feature type="domain" description="Kinesin motor" evidence="4">
    <location>
        <begin position="223"/>
        <end position="553"/>
    </location>
</feature>
<feature type="region of interest" description="Globular" evidence="3">
    <location>
        <begin position="1"/>
        <end position="217"/>
    </location>
</feature>
<feature type="region of interest" description="Disordered" evidence="5">
    <location>
        <begin position="66"/>
        <end position="139"/>
    </location>
</feature>
<feature type="region of interest" description="Disordered" evidence="5">
    <location>
        <begin position="165"/>
        <end position="186"/>
    </location>
</feature>
<feature type="coiled-coil region" evidence="3">
    <location>
        <begin position="660"/>
        <end position="699"/>
    </location>
</feature>
<feature type="compositionally biased region" description="Polar residues" evidence="5">
    <location>
        <begin position="123"/>
        <end position="139"/>
    </location>
</feature>
<feature type="binding site">
    <location>
        <begin position="313"/>
        <end position="320"/>
    </location>
    <ligand>
        <name>ATP</name>
        <dbReference type="ChEBI" id="CHEBI:30616"/>
    </ligand>
</feature>
<feature type="modified residue" description="Phosphoserine" evidence="17">
    <location>
        <position position="75"/>
    </location>
</feature>
<feature type="modified residue" description="Phosphothreonine" evidence="17">
    <location>
        <position position="78"/>
    </location>
</feature>
<feature type="modified residue" description="Phosphothreonine" evidence="18">
    <location>
        <position position="97"/>
    </location>
</feature>
<feature type="modified residue" description="Phosphoserine" evidence="18">
    <location>
        <position position="100"/>
    </location>
</feature>
<feature type="modified residue" description="N6-acetyllysine" evidence="2">
    <location>
        <position position="102"/>
    </location>
</feature>
<feature type="modified residue" description="Phosphoserine" evidence="18">
    <location>
        <position position="135"/>
    </location>
</feature>
<feature type="modified residue" description="Phosphoserine" evidence="18">
    <location>
        <position position="140"/>
    </location>
</feature>
<feature type="splice variant" id="VSP_028374" description="In isoform 1 and isoform 2." evidence="12 13 15">
    <location>
        <begin position="1"/>
        <end position="27"/>
    </location>
</feature>
<feature type="splice variant" id="VSP_047373" description="In isoform 5." evidence="16">
    <original>MATANFGKIQIGIYVEIKRSD</original>
    <variation>M</variation>
    <location>
        <begin position="1"/>
        <end position="21"/>
    </location>
</feature>
<feature type="splice variant" id="VSP_028375" description="In isoform 2." evidence="12 15">
    <original>GSVSDISPVQAAKKEFGPPS</original>
    <variation>A</variation>
    <location>
        <begin position="134"/>
        <end position="153"/>
    </location>
</feature>
<feature type="splice variant" id="VSP_028376" description="In isoform 4." evidence="14">
    <original>E</original>
    <variation>EFGISPSDIPFSQGSGSRPDLSPSYEYDDFSPSVTRVKE</variation>
    <location>
        <position position="552"/>
    </location>
</feature>
<feature type="sequence variant" id="VAR_070575" description="In CDCBM3; results in abnormal cellular localization with predominant decoration of microtubules rather than diffuse punctiform cytoplasmic and nuclear distribution as observed for wild-type protein; dbSNP:rs587777034." evidence="10">
    <original>S</original>
    <variation>N</variation>
    <location>
        <position position="317"/>
    </location>
</feature>
<feature type="sequence variant" id="VAR_070576" description="In CDCBM3; results in abnormal cellular localization with predominant decoration of microtubules rather than diffuse punctiform cytoplasmic and nuclear distribution as observed for wild-type protein; dbSNP:rs587777033." evidence="10">
    <original>H</original>
    <variation>D</variation>
    <location>
        <position position="321"/>
    </location>
</feature>
<feature type="sequence conflict" description="In Ref. 7; AAP84320." evidence="16" ref="7">
    <original>Q</original>
    <variation>H</variation>
    <location>
        <position position="143"/>
    </location>
</feature>
<feature type="sequence conflict" description="In Ref. 7; AAP84320." evidence="16" ref="7">
    <original>S</original>
    <variation>SHLFFSA</variation>
    <location>
        <position position="153"/>
    </location>
</feature>
<feature type="sequence conflict" description="In Ref. 1; CAA69621." evidence="16" ref="1">
    <original>R</original>
    <variation>K</variation>
    <location>
        <position position="295"/>
    </location>
</feature>
<feature type="helix" evidence="19">
    <location>
        <begin position="197"/>
        <end position="205"/>
    </location>
</feature>
<feature type="strand" evidence="19">
    <location>
        <begin position="223"/>
        <end position="230"/>
    </location>
</feature>
<feature type="helix" evidence="19">
    <location>
        <begin position="235"/>
        <end position="239"/>
    </location>
</feature>
<feature type="strand" evidence="19">
    <location>
        <begin position="250"/>
        <end position="261"/>
    </location>
</feature>
<feature type="strand" evidence="19">
    <location>
        <begin position="267"/>
        <end position="275"/>
    </location>
</feature>
<feature type="strand" evidence="19">
    <location>
        <begin position="277"/>
        <end position="280"/>
    </location>
</feature>
<feature type="helix" evidence="19">
    <location>
        <begin position="286"/>
        <end position="292"/>
    </location>
</feature>
<feature type="helix" evidence="19">
    <location>
        <begin position="295"/>
        <end position="302"/>
    </location>
</feature>
<feature type="strand" evidence="19">
    <location>
        <begin position="306"/>
        <end position="313"/>
    </location>
</feature>
<feature type="helix" evidence="19">
    <location>
        <begin position="319"/>
        <end position="323"/>
    </location>
</feature>
<feature type="helix" evidence="19">
    <location>
        <begin position="338"/>
        <end position="349"/>
    </location>
</feature>
<feature type="helix" evidence="19">
    <location>
        <begin position="353"/>
        <end position="356"/>
    </location>
</feature>
<feature type="turn" evidence="19">
    <location>
        <begin position="357"/>
        <end position="359"/>
    </location>
</feature>
<feature type="strand" evidence="19">
    <location>
        <begin position="361"/>
        <end position="370"/>
    </location>
</feature>
<feature type="strand" evidence="19">
    <location>
        <begin position="373"/>
        <end position="376"/>
    </location>
</feature>
<feature type="turn" evidence="19">
    <location>
        <begin position="377"/>
        <end position="381"/>
    </location>
</feature>
<feature type="strand" evidence="19">
    <location>
        <begin position="383"/>
        <end position="387"/>
    </location>
</feature>
<feature type="strand" evidence="19">
    <location>
        <begin position="395"/>
        <end position="397"/>
    </location>
</feature>
<feature type="helix" evidence="19">
    <location>
        <begin position="407"/>
        <end position="421"/>
    </location>
</feature>
<feature type="strand" evidence="19">
    <location>
        <begin position="434"/>
        <end position="457"/>
    </location>
</feature>
<feature type="helix" evidence="19">
    <location>
        <begin position="472"/>
        <end position="497"/>
    </location>
</feature>
<feature type="helix" evidence="19">
    <location>
        <begin position="499"/>
        <end position="501"/>
    </location>
</feature>
<feature type="helix" evidence="19">
    <location>
        <begin position="504"/>
        <end position="506"/>
    </location>
</feature>
<feature type="helix" evidence="19">
    <location>
        <begin position="508"/>
        <end position="512"/>
    </location>
</feature>
<feature type="helix" evidence="19">
    <location>
        <begin position="514"/>
        <end position="518"/>
    </location>
</feature>
<feature type="strand" evidence="19">
    <location>
        <begin position="522"/>
        <end position="530"/>
    </location>
</feature>
<feature type="helix" evidence="19">
    <location>
        <begin position="534"/>
        <end position="536"/>
    </location>
</feature>
<feature type="helix" evidence="19">
    <location>
        <begin position="537"/>
        <end position="548"/>
    </location>
</feature>
<feature type="modified residue" description="Phosphoserine" evidence="2">
    <location sequence="O00139-4">
        <position position="556"/>
    </location>
</feature>
<feature type="modified residue" description="Phosphoserine" evidence="2">
    <location sequence="O00139-4">
        <position position="573"/>
    </location>
</feature>
<reference key="1">
    <citation type="journal article" date="1997" name="Genomics">
        <title>Identification of a novel human kinesin-related gene (HK2) by the cDNA differential display technique.</title>
        <authorList>
            <person name="Debernardi S."/>
            <person name="Fontanella E."/>
            <person name="de Gregorio L."/>
            <person name="Pierotti M.A."/>
            <person name="Delia D."/>
        </authorList>
    </citation>
    <scope>NUCLEOTIDE SEQUENCE [MRNA] (ISOFORMS 1 AND 2)</scope>
</reference>
<reference key="2">
    <citation type="journal article" date="2004" name="Nat. Genet.">
        <title>Complete sequencing and characterization of 21,243 full-length human cDNAs.</title>
        <authorList>
            <person name="Ota T."/>
            <person name="Suzuki Y."/>
            <person name="Nishikawa T."/>
            <person name="Otsuki T."/>
            <person name="Sugiyama T."/>
            <person name="Irie R."/>
            <person name="Wakamatsu A."/>
            <person name="Hayashi K."/>
            <person name="Sato H."/>
            <person name="Nagai K."/>
            <person name="Kimura K."/>
            <person name="Makita H."/>
            <person name="Sekine M."/>
            <person name="Obayashi M."/>
            <person name="Nishi T."/>
            <person name="Shibahara T."/>
            <person name="Tanaka T."/>
            <person name="Ishii S."/>
            <person name="Yamamoto J."/>
            <person name="Saito K."/>
            <person name="Kawai Y."/>
            <person name="Isono Y."/>
            <person name="Nakamura Y."/>
            <person name="Nagahari K."/>
            <person name="Murakami K."/>
            <person name="Yasuda T."/>
            <person name="Iwayanagi T."/>
            <person name="Wagatsuma M."/>
            <person name="Shiratori A."/>
            <person name="Sudo H."/>
            <person name="Hosoiri T."/>
            <person name="Kaku Y."/>
            <person name="Kodaira H."/>
            <person name="Kondo H."/>
            <person name="Sugawara M."/>
            <person name="Takahashi M."/>
            <person name="Kanda K."/>
            <person name="Yokoi T."/>
            <person name="Furuya T."/>
            <person name="Kikkawa E."/>
            <person name="Omura Y."/>
            <person name="Abe K."/>
            <person name="Kamihara K."/>
            <person name="Katsuta N."/>
            <person name="Sato K."/>
            <person name="Tanikawa M."/>
            <person name="Yamazaki M."/>
            <person name="Ninomiya K."/>
            <person name="Ishibashi T."/>
            <person name="Yamashita H."/>
            <person name="Murakawa K."/>
            <person name="Fujimori K."/>
            <person name="Tanai H."/>
            <person name="Kimata M."/>
            <person name="Watanabe M."/>
            <person name="Hiraoka S."/>
            <person name="Chiba Y."/>
            <person name="Ishida S."/>
            <person name="Ono Y."/>
            <person name="Takiguchi S."/>
            <person name="Watanabe S."/>
            <person name="Yosida M."/>
            <person name="Hotuta T."/>
            <person name="Kusano J."/>
            <person name="Kanehori K."/>
            <person name="Takahashi-Fujii A."/>
            <person name="Hara H."/>
            <person name="Tanase T.-O."/>
            <person name="Nomura Y."/>
            <person name="Togiya S."/>
            <person name="Komai F."/>
            <person name="Hara R."/>
            <person name="Takeuchi K."/>
            <person name="Arita M."/>
            <person name="Imose N."/>
            <person name="Musashino K."/>
            <person name="Yuuki H."/>
            <person name="Oshima A."/>
            <person name="Sasaki N."/>
            <person name="Aotsuka S."/>
            <person name="Yoshikawa Y."/>
            <person name="Matsunawa H."/>
            <person name="Ichihara T."/>
            <person name="Shiohata N."/>
            <person name="Sano S."/>
            <person name="Moriya S."/>
            <person name="Momiyama H."/>
            <person name="Satoh N."/>
            <person name="Takami S."/>
            <person name="Terashima Y."/>
            <person name="Suzuki O."/>
            <person name="Nakagawa S."/>
            <person name="Senoh A."/>
            <person name="Mizoguchi H."/>
            <person name="Goto Y."/>
            <person name="Shimizu F."/>
            <person name="Wakebe H."/>
            <person name="Hishigaki H."/>
            <person name="Watanabe T."/>
            <person name="Sugiyama A."/>
            <person name="Takemoto M."/>
            <person name="Kawakami B."/>
            <person name="Yamazaki M."/>
            <person name="Watanabe K."/>
            <person name="Kumagai A."/>
            <person name="Itakura S."/>
            <person name="Fukuzumi Y."/>
            <person name="Fujimori Y."/>
            <person name="Komiyama M."/>
            <person name="Tashiro H."/>
            <person name="Tanigami A."/>
            <person name="Fujiwara T."/>
            <person name="Ono T."/>
            <person name="Yamada K."/>
            <person name="Fujii Y."/>
            <person name="Ozaki K."/>
            <person name="Hirao M."/>
            <person name="Ohmori Y."/>
            <person name="Kawabata A."/>
            <person name="Hikiji T."/>
            <person name="Kobatake N."/>
            <person name="Inagaki H."/>
            <person name="Ikema Y."/>
            <person name="Okamoto S."/>
            <person name="Okitani R."/>
            <person name="Kawakami T."/>
            <person name="Noguchi S."/>
            <person name="Itoh T."/>
            <person name="Shigeta K."/>
            <person name="Senba T."/>
            <person name="Matsumura K."/>
            <person name="Nakajima Y."/>
            <person name="Mizuno T."/>
            <person name="Morinaga M."/>
            <person name="Sasaki M."/>
            <person name="Togashi T."/>
            <person name="Oyama M."/>
            <person name="Hata H."/>
            <person name="Watanabe M."/>
            <person name="Komatsu T."/>
            <person name="Mizushima-Sugano J."/>
            <person name="Satoh T."/>
            <person name="Shirai Y."/>
            <person name="Takahashi Y."/>
            <person name="Nakagawa K."/>
            <person name="Okumura K."/>
            <person name="Nagase T."/>
            <person name="Nomura N."/>
            <person name="Kikuchi H."/>
            <person name="Masuho Y."/>
            <person name="Yamashita R."/>
            <person name="Nakai K."/>
            <person name="Yada T."/>
            <person name="Nakamura Y."/>
            <person name="Ohara O."/>
            <person name="Isogai T."/>
            <person name="Sugano S."/>
        </authorList>
    </citation>
    <scope>NUCLEOTIDE SEQUENCE [LARGE SCALE MRNA] (ISOFORM 2)</scope>
    <source>
        <tissue>Testis</tissue>
    </source>
</reference>
<reference key="3">
    <citation type="journal article" date="2007" name="BMC Genomics">
        <title>The full-ORF clone resource of the German cDNA consortium.</title>
        <authorList>
            <person name="Bechtel S."/>
            <person name="Rosenfelder H."/>
            <person name="Duda A."/>
            <person name="Schmidt C.P."/>
            <person name="Ernst U."/>
            <person name="Wellenreuther R."/>
            <person name="Mehrle A."/>
            <person name="Schuster C."/>
            <person name="Bahr A."/>
            <person name="Bloecker H."/>
            <person name="Heubner D."/>
            <person name="Hoerlein A."/>
            <person name="Michel G."/>
            <person name="Wedler H."/>
            <person name="Koehrer K."/>
            <person name="Ottenwaelder B."/>
            <person name="Poustka A."/>
            <person name="Wiemann S."/>
            <person name="Schupp I."/>
        </authorList>
    </citation>
    <scope>NUCLEOTIDE SEQUENCE [LARGE SCALE MRNA] (ISOFORMS 3 AND 4)</scope>
    <source>
        <tissue>Fetal brain</tissue>
        <tissue>Salivary gland</tissue>
    </source>
</reference>
<reference key="4">
    <citation type="journal article" date="2004" name="Nature">
        <title>The DNA sequence and comparative analysis of human chromosome 5.</title>
        <authorList>
            <person name="Schmutz J."/>
            <person name="Martin J."/>
            <person name="Terry A."/>
            <person name="Couronne O."/>
            <person name="Grimwood J."/>
            <person name="Lowry S."/>
            <person name="Gordon L.A."/>
            <person name="Scott D."/>
            <person name="Xie G."/>
            <person name="Huang W."/>
            <person name="Hellsten U."/>
            <person name="Tran-Gyamfi M."/>
            <person name="She X."/>
            <person name="Prabhakar S."/>
            <person name="Aerts A."/>
            <person name="Altherr M."/>
            <person name="Bajorek E."/>
            <person name="Black S."/>
            <person name="Branscomb E."/>
            <person name="Caoile C."/>
            <person name="Challacombe J.F."/>
            <person name="Chan Y.M."/>
            <person name="Denys M."/>
            <person name="Detter J.C."/>
            <person name="Escobar J."/>
            <person name="Flowers D."/>
            <person name="Fotopulos D."/>
            <person name="Glavina T."/>
            <person name="Gomez M."/>
            <person name="Gonzales E."/>
            <person name="Goodstein D."/>
            <person name="Grigoriev I."/>
            <person name="Groza M."/>
            <person name="Hammon N."/>
            <person name="Hawkins T."/>
            <person name="Haydu L."/>
            <person name="Israni S."/>
            <person name="Jett J."/>
            <person name="Kadner K."/>
            <person name="Kimball H."/>
            <person name="Kobayashi A."/>
            <person name="Lopez F."/>
            <person name="Lou Y."/>
            <person name="Martinez D."/>
            <person name="Medina C."/>
            <person name="Morgan J."/>
            <person name="Nandkeshwar R."/>
            <person name="Noonan J.P."/>
            <person name="Pitluck S."/>
            <person name="Pollard M."/>
            <person name="Predki P."/>
            <person name="Priest J."/>
            <person name="Ramirez L."/>
            <person name="Retterer J."/>
            <person name="Rodriguez A."/>
            <person name="Rogers S."/>
            <person name="Salamov A."/>
            <person name="Salazar A."/>
            <person name="Thayer N."/>
            <person name="Tice H."/>
            <person name="Tsai M."/>
            <person name="Ustaszewska A."/>
            <person name="Vo N."/>
            <person name="Wheeler J."/>
            <person name="Wu K."/>
            <person name="Yang J."/>
            <person name="Dickson M."/>
            <person name="Cheng J.-F."/>
            <person name="Eichler E.E."/>
            <person name="Olsen A."/>
            <person name="Pennacchio L.A."/>
            <person name="Rokhsar D.S."/>
            <person name="Richardson P."/>
            <person name="Lucas S.M."/>
            <person name="Myers R.M."/>
            <person name="Rubin E.M."/>
        </authorList>
    </citation>
    <scope>NUCLEOTIDE SEQUENCE [LARGE SCALE GENOMIC DNA]</scope>
</reference>
<reference key="5">
    <citation type="submission" date="2005-09" db="EMBL/GenBank/DDBJ databases">
        <authorList>
            <person name="Mural R.J."/>
            <person name="Istrail S."/>
            <person name="Sutton G.G."/>
            <person name="Florea L."/>
            <person name="Halpern A.L."/>
            <person name="Mobarry C.M."/>
            <person name="Lippert R."/>
            <person name="Walenz B."/>
            <person name="Shatkay H."/>
            <person name="Dew I."/>
            <person name="Miller J.R."/>
            <person name="Flanigan M.J."/>
            <person name="Edwards N.J."/>
            <person name="Bolanos R."/>
            <person name="Fasulo D."/>
            <person name="Halldorsson B.V."/>
            <person name="Hannenhalli S."/>
            <person name="Turner R."/>
            <person name="Yooseph S."/>
            <person name="Lu F."/>
            <person name="Nusskern D.R."/>
            <person name="Shue B.C."/>
            <person name="Zheng X.H."/>
            <person name="Zhong F."/>
            <person name="Delcher A.L."/>
            <person name="Huson D.H."/>
            <person name="Kravitz S.A."/>
            <person name="Mouchard L."/>
            <person name="Reinert K."/>
            <person name="Remington K.A."/>
            <person name="Clark A.G."/>
            <person name="Waterman M.S."/>
            <person name="Eichler E.E."/>
            <person name="Adams M.D."/>
            <person name="Hunkapiller M.W."/>
            <person name="Myers E.W."/>
            <person name="Venter J.C."/>
        </authorList>
    </citation>
    <scope>NUCLEOTIDE SEQUENCE [LARGE SCALE GENOMIC DNA]</scope>
</reference>
<reference key="6">
    <citation type="journal article" date="2004" name="Genome Res.">
        <title>The status, quality, and expansion of the NIH full-length cDNA project: the Mammalian Gene Collection (MGC).</title>
        <authorList>
            <consortium name="The MGC Project Team"/>
        </authorList>
    </citation>
    <scope>NUCLEOTIDE SEQUENCE [LARGE SCALE MRNA] (ISOFORM 1)</scope>
    <source>
        <tissue>Brain</tissue>
    </source>
</reference>
<reference key="7">
    <citation type="submission" date="2003-06" db="EMBL/GenBank/DDBJ databases">
        <authorList>
            <person name="Sha J.H."/>
            <person name="Zhou Z.M."/>
            <person name="Li J.M."/>
        </authorList>
    </citation>
    <scope>NUCLEOTIDE SEQUENCE [MRNA] OF 60-706 (ISOFORMS 1/3)</scope>
    <source>
        <tissue>Testis</tissue>
    </source>
</reference>
<reference key="8">
    <citation type="journal article" date="2005" name="Mol. Biol. Cell">
        <title>Functional analysis of human microtubule-based motor proteins, the kinesins and dyneins, in mitosis/cytokinesis using RNA interference.</title>
        <authorList>
            <person name="Zhu C."/>
            <person name="Zhao J."/>
            <person name="Bibikova M."/>
            <person name="Leverson J.D."/>
            <person name="Bossy-Wetzel E."/>
            <person name="Fan J.-B."/>
            <person name="Abraham R.T."/>
            <person name="Jiang W."/>
        </authorList>
    </citation>
    <scope>FUNCTION</scope>
</reference>
<reference key="9">
    <citation type="journal article" date="2007" name="Mol. Biol. Cell">
        <title>The kinesin-13 proteins Kif2a, Kif2b, and Kif2c/MCAK have distinct roles during mitosis in human cells.</title>
        <authorList>
            <person name="Manning A.L."/>
            <person name="Ganem N.J."/>
            <person name="Bakhoum S.F."/>
            <person name="Wagenbach M."/>
            <person name="Wordeman L."/>
            <person name="Compton D.A."/>
        </authorList>
    </citation>
    <scope>FUNCTION</scope>
</reference>
<reference key="10">
    <citation type="journal article" date="2008" name="J. Cell Biol.">
        <title>DDA3 recruits microtubule depolymerase Kif2a to spindle poles and controls spindle dynamics and mitotic chromosome movement.</title>
        <authorList>
            <person name="Jang C.Y."/>
            <person name="Wong J."/>
            <person name="Coppinger J.A."/>
            <person name="Seki A."/>
            <person name="Yates J.R. III"/>
            <person name="Fang G."/>
        </authorList>
    </citation>
    <scope>FUNCTION</scope>
    <scope>INTERACTION WITH PSRC1</scope>
    <scope>SUBCELLULAR LOCATION</scope>
    <scope>IDENTIFICATION BY MASS SPECTROMETRY</scope>
</reference>
<reference key="11">
    <citation type="journal article" date="2009" name="J. Cell Sci.">
        <title>Plk1 and Aurora A regulate the depolymerase activity and the cellular localization of Kif2a.</title>
        <authorList>
            <person name="Jang C.Y."/>
            <person name="Coppinger J.A."/>
            <person name="Seki A."/>
            <person name="Yates J.R. III"/>
            <person name="Fang G."/>
        </authorList>
    </citation>
    <scope>INTERACTION WITH PLK1 AND AURKA</scope>
    <scope>SUBCELLULAR LOCATION</scope>
    <scope>PHOSPHORYLATION</scope>
    <scope>IDENTIFICATION BY MASS SPECTROMETRY</scope>
</reference>
<reference key="12">
    <citation type="journal article" date="2009" name="Sci. Signal.">
        <title>Quantitative phosphoproteomic analysis of T cell receptor signaling reveals system-wide modulation of protein-protein interactions.</title>
        <authorList>
            <person name="Mayya V."/>
            <person name="Lundgren D.H."/>
            <person name="Hwang S.-I."/>
            <person name="Rezaul K."/>
            <person name="Wu L."/>
            <person name="Eng J.K."/>
            <person name="Rodionov V."/>
            <person name="Han D.K."/>
        </authorList>
    </citation>
    <scope>PHOSPHORYLATION [LARGE SCALE ANALYSIS] AT SER-75 AND THR-78</scope>
    <scope>IDENTIFICATION BY MASS SPECTROMETRY [LARGE SCALE ANALYSIS]</scope>
    <source>
        <tissue>Leukemic T-cell</tissue>
    </source>
</reference>
<reference key="13">
    <citation type="journal article" date="2011" name="BMC Syst. Biol.">
        <title>Initial characterization of the human central proteome.</title>
        <authorList>
            <person name="Burkard T.R."/>
            <person name="Planyavsky M."/>
            <person name="Kaupe I."/>
            <person name="Breitwieser F.P."/>
            <person name="Buerckstuemmer T."/>
            <person name="Bennett K.L."/>
            <person name="Superti-Furga G."/>
            <person name="Colinge J."/>
        </authorList>
    </citation>
    <scope>IDENTIFICATION BY MASS SPECTROMETRY [LARGE SCALE ANALYSIS]</scope>
</reference>
<reference key="14">
    <citation type="journal article" date="2013" name="J. Proteome Res.">
        <title>Toward a comprehensive characterization of a human cancer cell phosphoproteome.</title>
        <authorList>
            <person name="Zhou H."/>
            <person name="Di Palma S."/>
            <person name="Preisinger C."/>
            <person name="Peng M."/>
            <person name="Polat A.N."/>
            <person name="Heck A.J."/>
            <person name="Mohammed S."/>
        </authorList>
    </citation>
    <scope>PHOSPHORYLATION [LARGE SCALE ANALYSIS] AT THR-97; SER-100; SER-135 AND SER-140</scope>
    <scope>IDENTIFICATION BY MASS SPECTROMETRY [LARGE SCALE ANALYSIS]</scope>
    <source>
        <tissue>Cervix carcinoma</tissue>
        <tissue>Erythroleukemia</tissue>
    </source>
</reference>
<reference key="15">
    <citation type="journal article" date="2019" name="Mol. Biol. Cell">
        <title>Mps1 regulates spindle morphology through MCRS1 to promote chromosome alignment.</title>
        <authorList>
            <person name="Yang H."/>
            <person name="Zhang F."/>
            <person name="Huang C.J."/>
            <person name="Liao J."/>
            <person name="Han Y."/>
            <person name="Hao P."/>
            <person name="Chu Y."/>
            <person name="Lu X."/>
            <person name="Li W."/>
            <person name="Yu H."/>
            <person name="Kang J."/>
        </authorList>
    </citation>
    <scope>FUNCTION</scope>
    <scope>INTERACTION WITH MCRS1</scope>
    <scope>SUBCELLULAR LOCATION</scope>
</reference>
<reference key="16">
    <citation type="submission" date="2009-02" db="PDB data bank">
        <title>Crystal structure of the human KIF2 motor domain in complex with ADP.</title>
        <authorList>
            <consortium name="Structural genomics consortium (SGC)"/>
        </authorList>
    </citation>
    <scope>X-RAY CRYSTALLOGRAPHY (2.35 ANGSTROMS) OF 153-553 IN COMPLEX WITH ADP</scope>
</reference>
<reference key="17">
    <citation type="journal article" date="2013" name="Nat. Genet.">
        <title>Mutations in TUBG1, DYNC1H1, KIF5C and KIF2A cause malformations of cortical development and microcephaly.</title>
        <authorList>
            <person name="Poirier K."/>
            <person name="Lebrun N."/>
            <person name="Broix L."/>
            <person name="Tian G."/>
            <person name="Saillour Y."/>
            <person name="Boscheron C."/>
            <person name="Parrini E."/>
            <person name="Valence S."/>
            <person name="Pierre B.S."/>
            <person name="Oger M."/>
            <person name="Lacombe D."/>
            <person name="Genevieve D."/>
            <person name="Fontana E."/>
            <person name="Darra F."/>
            <person name="Cances C."/>
            <person name="Barth M."/>
            <person name="Bonneau D."/>
            <person name="Bernadina B.D."/>
            <person name="N'guyen S."/>
            <person name="Gitiaux C."/>
            <person name="Parent P."/>
            <person name="des Portes V."/>
            <person name="Pedespan J.M."/>
            <person name="Legrez V."/>
            <person name="Castelnau-Ptakine L."/>
            <person name="Nitschke P."/>
            <person name="Hieu T."/>
            <person name="Masson C."/>
            <person name="Zelenika D."/>
            <person name="Andrieux A."/>
            <person name="Francis F."/>
            <person name="Guerrini R."/>
            <person name="Cowan N.J."/>
            <person name="Bahi-Buisson N."/>
            <person name="Chelly J."/>
        </authorList>
    </citation>
    <scope>VARIANTS CDCBM3 ASN-317 AND ASP-321</scope>
    <scope>CHARACTERIZATION OF VARIANTS CDCBM3 ASN-317 AND ASP-321</scope>
</reference>
<proteinExistence type="evidence at protein level"/>
<evidence type="ECO:0000250" key="1"/>
<evidence type="ECO:0000250" key="2">
    <source>
        <dbReference type="UniProtKB" id="P28740"/>
    </source>
</evidence>
<evidence type="ECO:0000255" key="3"/>
<evidence type="ECO:0000255" key="4">
    <source>
        <dbReference type="PROSITE-ProRule" id="PRU00283"/>
    </source>
</evidence>
<evidence type="ECO:0000256" key="5">
    <source>
        <dbReference type="SAM" id="MobiDB-lite"/>
    </source>
</evidence>
<evidence type="ECO:0000269" key="6">
    <source>
    </source>
</evidence>
<evidence type="ECO:0000269" key="7">
    <source>
    </source>
</evidence>
<evidence type="ECO:0000269" key="8">
    <source>
    </source>
</evidence>
<evidence type="ECO:0000269" key="9">
    <source>
    </source>
</evidence>
<evidence type="ECO:0000269" key="10">
    <source>
    </source>
</evidence>
<evidence type="ECO:0000269" key="11">
    <source>
    </source>
</evidence>
<evidence type="ECO:0000303" key="12">
    <source>
    </source>
</evidence>
<evidence type="ECO:0000303" key="13">
    <source>
    </source>
</evidence>
<evidence type="ECO:0000303" key="14">
    <source>
    </source>
</evidence>
<evidence type="ECO:0000303" key="15">
    <source>
    </source>
</evidence>
<evidence type="ECO:0000305" key="16"/>
<evidence type="ECO:0007744" key="17">
    <source>
    </source>
</evidence>
<evidence type="ECO:0007744" key="18">
    <source>
    </source>
</evidence>
<evidence type="ECO:0007829" key="19">
    <source>
        <dbReference type="PDB" id="2GRY"/>
    </source>
</evidence>